<sequence length="435" mass="47794">MGRPQRGDTAKERRERQDKVTSPPESGPISQSGLSDTVDWTSETNENMWLAYDFDERKDINQARGQDIHRDQELFDVVLQNNMSDDQFASTSASVSDDWYDTGFDQAFLQPSSTSTTAYSVEPSPFISIEPPTLTKETKKRNSQSSDSSKPSSTSSQSLIERVTSLNLDLHQQSIIAGQIVDEFGNIDPDMIDPLHKDNRLSFAVDSMTQGLQNFHSLLLEIINTANGTTFSSESASPHVNRPPIQQQQSPSRFLAPPSRSCVPSLFCFREGNSSQQQSKNNATGIDLPTSLMIISCHIHLIRLCRHVFAGIRAALSSKDQHQQALLVLSSCQVGGVSISHDSDLKLLILIQVVARLINKIGVLLGYPCSPADLSNSAVGNLGNATEDERKKMLLPQLLRFVLAQEGVAGQSSHGDGMEGLREEIRKLNEVLATS</sequence>
<feature type="chain" id="PRO_0000458430" description="Transcription factor gkaF">
    <location>
        <begin position="1"/>
        <end position="435"/>
    </location>
</feature>
<feature type="region of interest" description="Disordered" evidence="1">
    <location>
        <begin position="1"/>
        <end position="40"/>
    </location>
</feature>
<feature type="region of interest" description="Disordered" evidence="1">
    <location>
        <begin position="115"/>
        <end position="158"/>
    </location>
</feature>
<feature type="region of interest" description="Disordered" evidence="1">
    <location>
        <begin position="231"/>
        <end position="257"/>
    </location>
</feature>
<feature type="compositionally biased region" description="Basic and acidic residues" evidence="1">
    <location>
        <begin position="1"/>
        <end position="19"/>
    </location>
</feature>
<feature type="compositionally biased region" description="Polar residues" evidence="1">
    <location>
        <begin position="28"/>
        <end position="40"/>
    </location>
</feature>
<feature type="compositionally biased region" description="Low complexity" evidence="1">
    <location>
        <begin position="143"/>
        <end position="158"/>
    </location>
</feature>
<keyword id="KW-0539">Nucleus</keyword>
<keyword id="KW-0804">Transcription</keyword>
<keyword id="KW-0805">Transcription regulation</keyword>
<keyword id="KW-0843">Virulence</keyword>
<dbReference type="EMBL" id="MW690135">
    <property type="protein sequence ID" value="QXF14607.1"/>
    <property type="molecule type" value="Genomic_DNA"/>
</dbReference>
<dbReference type="OrthoDB" id="4222821at2759"/>
<dbReference type="GO" id="GO:0005634">
    <property type="term" value="C:nucleus"/>
    <property type="evidence" value="ECO:0007669"/>
    <property type="project" value="UniProtKB-SubCell"/>
</dbReference>
<gene>
    <name evidence="3" type="primary">gkaF</name>
</gene>
<protein>
    <recommendedName>
        <fullName evidence="3">Transcription factor gkaF</fullName>
    </recommendedName>
    <alternativeName>
        <fullName evidence="3">GKK1032 biosynthesis cluster protein F</fullName>
    </alternativeName>
</protein>
<evidence type="ECO:0000256" key="1">
    <source>
        <dbReference type="SAM" id="MobiDB-lite"/>
    </source>
</evidence>
<evidence type="ECO:0000269" key="2">
    <source>
    </source>
</evidence>
<evidence type="ECO:0000303" key="3">
    <source>
    </source>
</evidence>
<evidence type="ECO:0000305" key="4"/>
<reference key="1">
    <citation type="journal article" date="2021" name="J. Am. Chem. Soc.">
        <title>Biosynthesis of para-cyclophane-containing hirsutellone family of fungal natural products.</title>
        <authorList>
            <person name="Ohashi M."/>
            <person name="Kakule T.B."/>
            <person name="Tang M.C."/>
            <person name="Jamieson C.S."/>
            <person name="Liu M."/>
            <person name="Zhao Y.L."/>
            <person name="Houk K.N."/>
            <person name="Tang Y."/>
        </authorList>
    </citation>
    <scope>NUCLEOTIDE SEQUENCE [GENOMIC DNA]</scope>
    <scope>FUNCTION</scope>
    <scope>CATALYTIC ACTIVITY</scope>
    <scope>PATHWAY</scope>
    <source>
        <strain>DSM 1997</strain>
    </source>
</reference>
<proteinExistence type="evidence at protein level"/>
<organism>
    <name type="scientific">Penicillium citrinum</name>
    <dbReference type="NCBI Taxonomy" id="5077"/>
    <lineage>
        <taxon>Eukaryota</taxon>
        <taxon>Fungi</taxon>
        <taxon>Dikarya</taxon>
        <taxon>Ascomycota</taxon>
        <taxon>Pezizomycotina</taxon>
        <taxon>Eurotiomycetes</taxon>
        <taxon>Eurotiomycetidae</taxon>
        <taxon>Eurotiales</taxon>
        <taxon>Aspergillaceae</taxon>
        <taxon>Penicillium</taxon>
    </lineage>
</organism>
<accession>A0A8F4NU40</accession>
<name>GKAF_PENCI</name>
<comment type="function">
    <text evidence="2">Transcription factor; part of the gene cluster that mediates the biosynthesis of GKK1032, fungal natural products containing a macrocyclic para-cyclophane connected to a decahydrofluorene ring system that show potent antitumor activities.</text>
</comment>
<comment type="subcellular location">
    <subcellularLocation>
        <location evidence="4">Nucleus</location>
    </subcellularLocation>
</comment>